<gene>
    <name evidence="1" type="primary">clpP</name>
</gene>
<dbReference type="EC" id="3.4.21.92" evidence="1"/>
<dbReference type="EMBL" id="AY958085">
    <property type="protein sequence ID" value="AAX45694.1"/>
    <property type="molecule type" value="Genomic_DNA"/>
</dbReference>
<dbReference type="RefSeq" id="YP_636436.1">
    <property type="nucleotide sequence ID" value="NC_008116.1"/>
</dbReference>
<dbReference type="SMR" id="Q32RU0"/>
<dbReference type="MEROPS" id="S14.002"/>
<dbReference type="GeneID" id="4108650"/>
<dbReference type="GO" id="GO:0009570">
    <property type="term" value="C:chloroplast stroma"/>
    <property type="evidence" value="ECO:0007669"/>
    <property type="project" value="UniProtKB-SubCell"/>
</dbReference>
<dbReference type="GO" id="GO:0009368">
    <property type="term" value="C:endopeptidase Clp complex"/>
    <property type="evidence" value="ECO:0007669"/>
    <property type="project" value="TreeGrafter"/>
</dbReference>
<dbReference type="GO" id="GO:0004176">
    <property type="term" value="F:ATP-dependent peptidase activity"/>
    <property type="evidence" value="ECO:0007669"/>
    <property type="project" value="InterPro"/>
</dbReference>
<dbReference type="GO" id="GO:0051117">
    <property type="term" value="F:ATPase binding"/>
    <property type="evidence" value="ECO:0007669"/>
    <property type="project" value="TreeGrafter"/>
</dbReference>
<dbReference type="GO" id="GO:0004252">
    <property type="term" value="F:serine-type endopeptidase activity"/>
    <property type="evidence" value="ECO:0007669"/>
    <property type="project" value="UniProtKB-UniRule"/>
</dbReference>
<dbReference type="GO" id="GO:0006515">
    <property type="term" value="P:protein quality control for misfolded or incompletely synthesized proteins"/>
    <property type="evidence" value="ECO:0007669"/>
    <property type="project" value="TreeGrafter"/>
</dbReference>
<dbReference type="CDD" id="cd07017">
    <property type="entry name" value="S14_ClpP_2"/>
    <property type="match status" value="1"/>
</dbReference>
<dbReference type="FunFam" id="3.90.226.10:FF:000006">
    <property type="entry name" value="ATP-dependent Clp protease proteolytic subunit"/>
    <property type="match status" value="1"/>
</dbReference>
<dbReference type="Gene3D" id="3.90.226.10">
    <property type="entry name" value="2-enoyl-CoA Hydratase, Chain A, domain 1"/>
    <property type="match status" value="1"/>
</dbReference>
<dbReference type="HAMAP" id="MF_00444">
    <property type="entry name" value="ClpP"/>
    <property type="match status" value="1"/>
</dbReference>
<dbReference type="InterPro" id="IPR001907">
    <property type="entry name" value="ClpP"/>
</dbReference>
<dbReference type="InterPro" id="IPR029045">
    <property type="entry name" value="ClpP/crotonase-like_dom_sf"/>
</dbReference>
<dbReference type="InterPro" id="IPR023562">
    <property type="entry name" value="ClpP/TepA"/>
</dbReference>
<dbReference type="InterPro" id="IPR033135">
    <property type="entry name" value="ClpP_His_AS"/>
</dbReference>
<dbReference type="InterPro" id="IPR018215">
    <property type="entry name" value="ClpP_Ser_AS"/>
</dbReference>
<dbReference type="PANTHER" id="PTHR10381">
    <property type="entry name" value="ATP-DEPENDENT CLP PROTEASE PROTEOLYTIC SUBUNIT"/>
    <property type="match status" value="1"/>
</dbReference>
<dbReference type="PANTHER" id="PTHR10381:SF15">
    <property type="entry name" value="CHLOROPLASTIC ATP-DEPENDENT CLP PROTEASE PROTEOLYTIC SUBUNIT 1"/>
    <property type="match status" value="1"/>
</dbReference>
<dbReference type="Pfam" id="PF00574">
    <property type="entry name" value="CLP_protease"/>
    <property type="match status" value="1"/>
</dbReference>
<dbReference type="PRINTS" id="PR00127">
    <property type="entry name" value="CLPPROTEASEP"/>
</dbReference>
<dbReference type="SUPFAM" id="SSF52096">
    <property type="entry name" value="ClpP/crotonase"/>
    <property type="match status" value="1"/>
</dbReference>
<dbReference type="PROSITE" id="PS00382">
    <property type="entry name" value="CLP_PROTEASE_HIS"/>
    <property type="match status" value="1"/>
</dbReference>
<dbReference type="PROSITE" id="PS00381">
    <property type="entry name" value="CLP_PROTEASE_SER"/>
    <property type="match status" value="1"/>
</dbReference>
<accession>Q32RU0</accession>
<evidence type="ECO:0000255" key="1">
    <source>
        <dbReference type="HAMAP-Rule" id="MF_00444"/>
    </source>
</evidence>
<sequence>MPIGVPRVPFRLPGEEEAVWVDVYNRLYRERLLFLGQNVDDEIANQLIGIMIYLNGEDESKDMYMYINSPGGAVLAGISVYDAMQFVVPDVHTICMGLAASMGSFILTGGEITKRIALPHARVMIHQPASSYYDGQAGECMMEAEEVLKLRDCITKVYVQRTGKPAWLISEDMERDVFMSAKEAQEYGIVDLVASDTNSTT</sequence>
<name>CLPP_STAPU</name>
<comment type="function">
    <text evidence="1">Cleaves peptides in various proteins in a process that requires ATP hydrolysis. Has a chymotrypsin-like activity. Plays a major role in the degradation of misfolded proteins.</text>
</comment>
<comment type="catalytic activity">
    <reaction evidence="1">
        <text>Hydrolysis of proteins to small peptides in the presence of ATP and magnesium. alpha-casein is the usual test substrate. In the absence of ATP, only oligopeptides shorter than five residues are hydrolyzed (such as succinyl-Leu-Tyr-|-NHMec, and Leu-Tyr-Leu-|-Tyr-Trp, in which cleavage of the -Tyr-|-Leu- and -Tyr-|-Trp bonds also occurs).</text>
        <dbReference type="EC" id="3.4.21.92"/>
    </reaction>
</comment>
<comment type="subunit">
    <text>Component of the chloroplastic Clp protease core complex.</text>
</comment>
<comment type="subcellular location">
    <subcellularLocation>
        <location evidence="1">Plastid</location>
        <location evidence="1">Chloroplast stroma</location>
    </subcellularLocation>
</comment>
<comment type="similarity">
    <text evidence="1">Belongs to the peptidase S14 family.</text>
</comment>
<reference key="1">
    <citation type="journal article" date="2005" name="BMC Biol.">
        <title>The complete chloroplast DNA sequences of the charophycean green algae Staurastrum and Zygnema reveal that the chloroplast genome underwent extensive changes during the evolution of the Zygnematales.</title>
        <authorList>
            <person name="Turmel M."/>
            <person name="Otis C."/>
            <person name="Lemieux C."/>
        </authorList>
    </citation>
    <scope>NUCLEOTIDE SEQUENCE [LARGE SCALE GENOMIC DNA]</scope>
</reference>
<proteinExistence type="inferred from homology"/>
<geneLocation type="chloroplast"/>
<organism>
    <name type="scientific">Staurastrum punctulatum</name>
    <name type="common">Green alga</name>
    <name type="synonym">Cosmoastrum punctulatum</name>
    <dbReference type="NCBI Taxonomy" id="102822"/>
    <lineage>
        <taxon>Eukaryota</taxon>
        <taxon>Viridiplantae</taxon>
        <taxon>Streptophyta</taxon>
        <taxon>Zygnematophyceae</taxon>
        <taxon>Zygnematophycidae</taxon>
        <taxon>Desmidiales</taxon>
        <taxon>Desmidiaceae</taxon>
        <taxon>Staurastrum</taxon>
    </lineage>
</organism>
<keyword id="KW-0150">Chloroplast</keyword>
<keyword id="KW-0378">Hydrolase</keyword>
<keyword id="KW-0934">Plastid</keyword>
<keyword id="KW-0645">Protease</keyword>
<keyword id="KW-0720">Serine protease</keyword>
<protein>
    <recommendedName>
        <fullName evidence="1">ATP-dependent Clp protease proteolytic subunit</fullName>
        <ecNumber evidence="1">3.4.21.92</ecNumber>
    </recommendedName>
    <alternativeName>
        <fullName evidence="1">Endopeptidase Clp</fullName>
    </alternativeName>
</protein>
<feature type="chain" id="PRO_0000275305" description="ATP-dependent Clp protease proteolytic subunit">
    <location>
        <begin position="1"/>
        <end position="201"/>
    </location>
</feature>
<feature type="active site" description="Nucleophile" evidence="1">
    <location>
        <position position="101"/>
    </location>
</feature>
<feature type="active site" evidence="1">
    <location>
        <position position="126"/>
    </location>
</feature>